<accession>Q9ZUT8</accession>
<feature type="chain" id="PRO_0000234632" description="ABC transporter G family member 33">
    <location>
        <begin position="1"/>
        <end position="1413"/>
    </location>
</feature>
<feature type="transmembrane region" description="Helical" evidence="2">
    <location>
        <begin position="509"/>
        <end position="529"/>
    </location>
</feature>
<feature type="transmembrane region" description="Helical" evidence="2">
    <location>
        <begin position="546"/>
        <end position="566"/>
    </location>
</feature>
<feature type="transmembrane region" description="Helical" evidence="2">
    <location>
        <begin position="580"/>
        <end position="600"/>
    </location>
</feature>
<feature type="transmembrane region" description="Helical" evidence="2">
    <location>
        <begin position="626"/>
        <end position="646"/>
    </location>
</feature>
<feature type="transmembrane region" description="Helical" evidence="2">
    <location>
        <begin position="652"/>
        <end position="672"/>
    </location>
</feature>
<feature type="transmembrane region" description="Helical" evidence="2">
    <location>
        <begin position="738"/>
        <end position="758"/>
    </location>
</feature>
<feature type="transmembrane region" description="Helical" evidence="2">
    <location>
        <begin position="1157"/>
        <end position="1177"/>
    </location>
</feature>
<feature type="transmembrane region" description="Helical" evidence="2">
    <location>
        <begin position="1189"/>
        <end position="1209"/>
    </location>
</feature>
<feature type="transmembrane region" description="Helical" evidence="2">
    <location>
        <begin position="1245"/>
        <end position="1265"/>
    </location>
</feature>
<feature type="transmembrane region" description="Helical" evidence="2">
    <location>
        <begin position="1276"/>
        <end position="1296"/>
    </location>
</feature>
<feature type="transmembrane region" description="Helical" evidence="2">
    <location>
        <begin position="1302"/>
        <end position="1322"/>
    </location>
</feature>
<feature type="transmembrane region" description="Helical" evidence="2">
    <location>
        <begin position="1330"/>
        <end position="1350"/>
    </location>
</feature>
<feature type="transmembrane region" description="Helical" evidence="2">
    <location>
        <begin position="1385"/>
        <end position="1405"/>
    </location>
</feature>
<feature type="domain" description="ABC transporter 1" evidence="3">
    <location>
        <begin position="140"/>
        <end position="412"/>
    </location>
</feature>
<feature type="domain" description="ABC transmembrane type-2 1">
    <location>
        <begin position="490"/>
        <end position="702"/>
    </location>
</feature>
<feature type="domain" description="ABC transporter 2" evidence="3">
    <location>
        <begin position="813"/>
        <end position="1065"/>
    </location>
</feature>
<feature type="domain" description="ABC transmembrane type-2 2">
    <location>
        <begin position="1138"/>
        <end position="1352"/>
    </location>
</feature>
<feature type="region of interest" description="Disordered" evidence="4">
    <location>
        <begin position="1"/>
        <end position="21"/>
    </location>
</feature>
<feature type="compositionally biased region" description="Low complexity" evidence="4">
    <location>
        <begin position="1"/>
        <end position="10"/>
    </location>
</feature>
<feature type="compositionally biased region" description="Basic and acidic residues" evidence="4">
    <location>
        <begin position="11"/>
        <end position="21"/>
    </location>
</feature>
<feature type="binding site" evidence="3">
    <location>
        <begin position="172"/>
        <end position="179"/>
    </location>
    <ligand>
        <name>ATP</name>
        <dbReference type="ChEBI" id="CHEBI:30616"/>
        <label>1</label>
    </ligand>
</feature>
<feature type="binding site" evidence="3">
    <location>
        <begin position="858"/>
        <end position="865"/>
    </location>
    <ligand>
        <name>ATP</name>
        <dbReference type="ChEBI" id="CHEBI:30616"/>
        <label>2</label>
    </ligand>
</feature>
<keyword id="KW-0067">ATP-binding</keyword>
<keyword id="KW-0472">Membrane</keyword>
<keyword id="KW-0547">Nucleotide-binding</keyword>
<keyword id="KW-1185">Reference proteome</keyword>
<keyword id="KW-0677">Repeat</keyword>
<keyword id="KW-0812">Transmembrane</keyword>
<keyword id="KW-1133">Transmembrane helix</keyword>
<keyword id="KW-0813">Transport</keyword>
<sequence>MGSSFRSSSSRNEHEDGGDEAEHALQWAEIQRLPTFKRLRSSLVDKYGEGTEKGKKVVDVTKLGAMERHLMIEKLIKHIENDNLKLLKKIRRRMERVGVEFPSIEVRYEHLGVEAACEVVEGKALPTLWNSLKHVFLDLLKLSGVRTNEANIKILTDVSGIISPGRLTLLLGPPGCGKTTLLKALSGNLENNLKCYGEISYNGHGLNEVVPQKTSAYISQHDLHIAEMTTRETIDFSARCQGVGSRTDIMMEVSKREKDGGIIPDPEIDAYMKAISVKGLKRSLQTDYILKILGLDICAETLVGNAMKRGISGGQKKRLTTAEMIVGPTKALFMDEITNGLDSSTAFQIIKSLQQVAHITNATVFVSLLQPAPESYDLFDDIVLMAEGKIVYHGPRDDVLKFFEECGFQCPERKGVADFLQEVISKKDQGQYWLHQNLPHSFVSVDTLSKRFKDLEIGRKIEEALSKPYDISKTHKDALSFNVYSLPKWELFRACISREFLLMKRNYFVYLFKTFQLVLAAIITMTVFIRTRMDIDIIHGNSYMSCLFFATVVLLVDGIPELSMTVQRLSVFYKQKQLCFYPAWAYAIPATVLKIPLSFFESLVWTCLTYYVIGYTPEPYRFFRQFMILFAVHFTSISMFRCIAAIFQTGVAAMTAGSFVMLITFVFAGFAIPYTDMPGWLKWGFWVNPISYAEIGLSVNEFLAPRWQKMQPTNVTLGRTILESRGLNYDDYMYWVSLSALLGLTIIFNTIFTLALSFLKSPTSSRPMISQDKLSELQGTKDSSVKKNKPLDSSIKTNEDPGKMILPFKPLTITFQDLNYYVDVPVEMKGQGYNEKKLQLLSEITGAFRPGVLTALMGISGAGKTTLLDVLAGRKTSGYIEGEIRISGFLKVQETFARVSGYCEQTDIHSPSITVEESLIYSAWLRLVPEINPQTKIRFVKQVLETIELEEIKDALVGVAGVSGLSTEQRKRLTVAVELVANPSIIFMDEPTTGLDARAAAIVMRAVKNVAETGRTIVCTIHQPSIHIFEAFDELVLLKRGGRMIYSGPLGQHSSCVIEYFQNIPGVAKIRDKYNPATWMLEVTSESVETELDMDFAKIYNESDLYKNNSELVKELSKPDHGSSDLHFKRTFAQNWWEQFKSCLWKMSLSYWRSPSYNLMRIGHTFISSFIFGLLFWNQGKKIDTQQNLFTVLGAIYGLVLFVGINNCTSALQYFETERNVMYRERFAGMYSAFAYALAQVVTEIPYIFIQSAEFVIVIYPMIGFYASFSKVFWSLYAMFCNLLCFNYLAMFLISITPNFMVAAILQSLFFTTFNIFAGFLIPKPQIPKWWVWFYYITPTSWTLNLFFSSQYGDIHQKINAFGETKTVASFLEDYFGFHHDRLMITAIILIAFPIALATMYAFFVAKLNFQKR</sequence>
<dbReference type="EMBL" id="AC005896">
    <property type="protein sequence ID" value="AAC98048.1"/>
    <property type="molecule type" value="Genomic_DNA"/>
</dbReference>
<dbReference type="EMBL" id="CP002685">
    <property type="protein sequence ID" value="AEC09377.1"/>
    <property type="molecule type" value="Genomic_DNA"/>
</dbReference>
<dbReference type="EMBL" id="BK001004">
    <property type="protein sequence ID" value="DAA00873.1"/>
    <property type="molecule type" value="Genomic_DNA"/>
</dbReference>
<dbReference type="PIR" id="G84790">
    <property type="entry name" value="G84790"/>
</dbReference>
<dbReference type="RefSeq" id="NP_181265.1">
    <property type="nucleotide sequence ID" value="NM_129284.2"/>
</dbReference>
<dbReference type="SMR" id="Q9ZUT8"/>
<dbReference type="FunCoup" id="Q9ZUT8">
    <property type="interactions" value="242"/>
</dbReference>
<dbReference type="STRING" id="3702.Q9ZUT8"/>
<dbReference type="GlyGen" id="Q9ZUT8">
    <property type="glycosylation" value="2 sites"/>
</dbReference>
<dbReference type="iPTMnet" id="Q9ZUT8"/>
<dbReference type="MetOSite" id="Q9ZUT8"/>
<dbReference type="PaxDb" id="3702-AT2G37280.1"/>
<dbReference type="ProteomicsDB" id="244531"/>
<dbReference type="EnsemblPlants" id="AT2G37280.1">
    <property type="protein sequence ID" value="AT2G37280.1"/>
    <property type="gene ID" value="AT2G37280"/>
</dbReference>
<dbReference type="GeneID" id="818305"/>
<dbReference type="Gramene" id="AT2G37280.1">
    <property type="protein sequence ID" value="AT2G37280.1"/>
    <property type="gene ID" value="AT2G37280"/>
</dbReference>
<dbReference type="KEGG" id="ath:AT2G37280"/>
<dbReference type="Araport" id="AT2G37280"/>
<dbReference type="TAIR" id="AT2G37280">
    <property type="gene designation" value="ABCG33"/>
</dbReference>
<dbReference type="eggNOG" id="KOG0065">
    <property type="taxonomic scope" value="Eukaryota"/>
</dbReference>
<dbReference type="HOGENOM" id="CLU_000604_35_6_1"/>
<dbReference type="InParanoid" id="Q9ZUT8"/>
<dbReference type="OrthoDB" id="245989at2759"/>
<dbReference type="PhylomeDB" id="Q9ZUT8"/>
<dbReference type="PRO" id="PR:Q9ZUT8"/>
<dbReference type="Proteomes" id="UP000006548">
    <property type="component" value="Chromosome 2"/>
</dbReference>
<dbReference type="ExpressionAtlas" id="Q9ZUT8">
    <property type="expression patterns" value="baseline and differential"/>
</dbReference>
<dbReference type="GO" id="GO:0005886">
    <property type="term" value="C:plasma membrane"/>
    <property type="evidence" value="ECO:0007005"/>
    <property type="project" value="TAIR"/>
</dbReference>
<dbReference type="GO" id="GO:0140359">
    <property type="term" value="F:ABC-type transporter activity"/>
    <property type="evidence" value="ECO:0007669"/>
    <property type="project" value="InterPro"/>
</dbReference>
<dbReference type="GO" id="GO:0005524">
    <property type="term" value="F:ATP binding"/>
    <property type="evidence" value="ECO:0007669"/>
    <property type="project" value="UniProtKB-KW"/>
</dbReference>
<dbReference type="GO" id="GO:0016887">
    <property type="term" value="F:ATP hydrolysis activity"/>
    <property type="evidence" value="ECO:0007669"/>
    <property type="project" value="InterPro"/>
</dbReference>
<dbReference type="CDD" id="cd03233">
    <property type="entry name" value="ABCG_PDR_domain1"/>
    <property type="match status" value="1"/>
</dbReference>
<dbReference type="CDD" id="cd03232">
    <property type="entry name" value="ABCG_PDR_domain2"/>
    <property type="match status" value="1"/>
</dbReference>
<dbReference type="FunFam" id="3.40.50.300:FF:000157">
    <property type="entry name" value="ABC transporter G family member 34"/>
    <property type="match status" value="1"/>
</dbReference>
<dbReference type="FunFam" id="3.40.50.300:FF:000179">
    <property type="entry name" value="ABC transporter G family member 34"/>
    <property type="match status" value="1"/>
</dbReference>
<dbReference type="Gene3D" id="3.40.50.300">
    <property type="entry name" value="P-loop containing nucleotide triphosphate hydrolases"/>
    <property type="match status" value="2"/>
</dbReference>
<dbReference type="InterPro" id="IPR003593">
    <property type="entry name" value="AAA+_ATPase"/>
</dbReference>
<dbReference type="InterPro" id="IPR013525">
    <property type="entry name" value="ABC2_TM"/>
</dbReference>
<dbReference type="InterPro" id="IPR003439">
    <property type="entry name" value="ABC_transporter-like_ATP-bd"/>
</dbReference>
<dbReference type="InterPro" id="IPR043926">
    <property type="entry name" value="ABCG_dom"/>
</dbReference>
<dbReference type="InterPro" id="IPR034001">
    <property type="entry name" value="ABCG_PDR_1"/>
</dbReference>
<dbReference type="InterPro" id="IPR034003">
    <property type="entry name" value="ABCG_PDR_2"/>
</dbReference>
<dbReference type="InterPro" id="IPR027417">
    <property type="entry name" value="P-loop_NTPase"/>
</dbReference>
<dbReference type="InterPro" id="IPR013581">
    <property type="entry name" value="PDR_assoc"/>
</dbReference>
<dbReference type="PANTHER" id="PTHR19241">
    <property type="entry name" value="ATP-BINDING CASSETTE TRANSPORTER"/>
    <property type="match status" value="1"/>
</dbReference>
<dbReference type="Pfam" id="PF01061">
    <property type="entry name" value="ABC2_membrane"/>
    <property type="match status" value="2"/>
</dbReference>
<dbReference type="Pfam" id="PF19055">
    <property type="entry name" value="ABC2_membrane_7"/>
    <property type="match status" value="2"/>
</dbReference>
<dbReference type="Pfam" id="PF00005">
    <property type="entry name" value="ABC_tran"/>
    <property type="match status" value="2"/>
</dbReference>
<dbReference type="Pfam" id="PF08370">
    <property type="entry name" value="PDR_assoc"/>
    <property type="match status" value="1"/>
</dbReference>
<dbReference type="SMART" id="SM00382">
    <property type="entry name" value="AAA"/>
    <property type="match status" value="2"/>
</dbReference>
<dbReference type="SUPFAM" id="SSF52540">
    <property type="entry name" value="P-loop containing nucleoside triphosphate hydrolases"/>
    <property type="match status" value="2"/>
</dbReference>
<dbReference type="PROSITE" id="PS50893">
    <property type="entry name" value="ABC_TRANSPORTER_2"/>
    <property type="match status" value="2"/>
</dbReference>
<gene>
    <name type="primary">ABCG33</name>
    <name type="synonym">PDR5</name>
    <name type="ordered locus">At2g37280</name>
    <name type="ORF">F3G5.7</name>
</gene>
<protein>
    <recommendedName>
        <fullName>ABC transporter G family member 33</fullName>
        <shortName>ABC transporter ABCG.33</shortName>
        <shortName>AtABCG33</shortName>
    </recommendedName>
    <alternativeName>
        <fullName>Pleiotropic drug resistance protein 5</fullName>
    </alternativeName>
</protein>
<evidence type="ECO:0000250" key="1"/>
<evidence type="ECO:0000255" key="2"/>
<evidence type="ECO:0000255" key="3">
    <source>
        <dbReference type="PROSITE-ProRule" id="PRU00434"/>
    </source>
</evidence>
<evidence type="ECO:0000256" key="4">
    <source>
        <dbReference type="SAM" id="MobiDB-lite"/>
    </source>
</evidence>
<evidence type="ECO:0000269" key="5">
    <source>
    </source>
</evidence>
<evidence type="ECO:0000305" key="6"/>
<name>AB33G_ARATH</name>
<proteinExistence type="evidence at transcript level"/>
<reference key="1">
    <citation type="journal article" date="1999" name="Nature">
        <title>Sequence and analysis of chromosome 2 of the plant Arabidopsis thaliana.</title>
        <authorList>
            <person name="Lin X."/>
            <person name="Kaul S."/>
            <person name="Rounsley S.D."/>
            <person name="Shea T.P."/>
            <person name="Benito M.-I."/>
            <person name="Town C.D."/>
            <person name="Fujii C.Y."/>
            <person name="Mason T.M."/>
            <person name="Bowman C.L."/>
            <person name="Barnstead M.E."/>
            <person name="Feldblyum T.V."/>
            <person name="Buell C.R."/>
            <person name="Ketchum K.A."/>
            <person name="Lee J.J."/>
            <person name="Ronning C.M."/>
            <person name="Koo H.L."/>
            <person name="Moffat K.S."/>
            <person name="Cronin L.A."/>
            <person name="Shen M."/>
            <person name="Pai G."/>
            <person name="Van Aken S."/>
            <person name="Umayam L."/>
            <person name="Tallon L.J."/>
            <person name="Gill J.E."/>
            <person name="Adams M.D."/>
            <person name="Carrera A.J."/>
            <person name="Creasy T.H."/>
            <person name="Goodman H.M."/>
            <person name="Somerville C.R."/>
            <person name="Copenhaver G.P."/>
            <person name="Preuss D."/>
            <person name="Nierman W.C."/>
            <person name="White O."/>
            <person name="Eisen J.A."/>
            <person name="Salzberg S.L."/>
            <person name="Fraser C.M."/>
            <person name="Venter J.C."/>
        </authorList>
    </citation>
    <scope>NUCLEOTIDE SEQUENCE [LARGE SCALE GENOMIC DNA]</scope>
    <source>
        <strain>cv. Columbia</strain>
    </source>
</reference>
<reference key="2">
    <citation type="journal article" date="2017" name="Plant J.">
        <title>Araport11: a complete reannotation of the Arabidopsis thaliana reference genome.</title>
        <authorList>
            <person name="Cheng C.Y."/>
            <person name="Krishnakumar V."/>
            <person name="Chan A.P."/>
            <person name="Thibaud-Nissen F."/>
            <person name="Schobel S."/>
            <person name="Town C.D."/>
        </authorList>
    </citation>
    <scope>GENOME REANNOTATION</scope>
    <source>
        <strain>cv. Columbia</strain>
    </source>
</reference>
<reference key="3">
    <citation type="journal article" date="2002" name="Planta">
        <title>The plant PDR family of ABC transporters.</title>
        <authorList>
            <person name="van den Brule S."/>
            <person name="Smart C.C."/>
        </authorList>
    </citation>
    <scope>IDENTIFICATION</scope>
    <scope>TISSUE SPECIFICITY</scope>
    <scope>INDUCTION</scope>
</reference>
<reference key="4">
    <citation type="journal article" date="2006" name="FEBS Lett.">
        <title>Organization and function of the plant pleiotropic drug resistance ABC transporter family.</title>
        <authorList>
            <person name="Crouzet J."/>
            <person name="Trombik T."/>
            <person name="Fraysse A.S."/>
            <person name="Boutry M."/>
        </authorList>
    </citation>
    <scope>GENE FAMILY</scope>
    <scope>NOMENCLATURE</scope>
</reference>
<reference key="5">
    <citation type="journal article" date="2008" name="Trends Plant Sci.">
        <title>Plant ABC proteins - a unified nomenclature and updated inventory.</title>
        <authorList>
            <person name="Verrier P.J."/>
            <person name="Bird D."/>
            <person name="Burla B."/>
            <person name="Dassa E."/>
            <person name="Forestier C."/>
            <person name="Geisler M."/>
            <person name="Klein M."/>
            <person name="Kolukisaoglu H.U."/>
            <person name="Lee Y."/>
            <person name="Martinoia E."/>
            <person name="Murphy A."/>
            <person name="Rea P.A."/>
            <person name="Samuels L."/>
            <person name="Schulz B."/>
            <person name="Spalding E.J."/>
            <person name="Yazaki K."/>
            <person name="Theodoulou F.L."/>
        </authorList>
    </citation>
    <scope>GENE FAMILY</scope>
    <scope>NOMENCLATURE</scope>
</reference>
<comment type="function">
    <text evidence="1">May be a general defense protein.</text>
</comment>
<comment type="subcellular location">
    <subcellularLocation>
        <location evidence="1">Membrane</location>
        <topology evidence="1">Multi-pass membrane protein</topology>
    </subcellularLocation>
</comment>
<comment type="tissue specificity">
    <text evidence="5">Expressed in roots and stems.</text>
</comment>
<comment type="induction">
    <text evidence="5">Induced by 2,4-D, but repressed by cycloheximide (CHX).</text>
</comment>
<comment type="similarity">
    <text evidence="6">Belongs to the ABC transporter superfamily. ABCG family. PDR (TC 3.A.1.205) subfamily.</text>
</comment>
<organism>
    <name type="scientific">Arabidopsis thaliana</name>
    <name type="common">Mouse-ear cress</name>
    <dbReference type="NCBI Taxonomy" id="3702"/>
    <lineage>
        <taxon>Eukaryota</taxon>
        <taxon>Viridiplantae</taxon>
        <taxon>Streptophyta</taxon>
        <taxon>Embryophyta</taxon>
        <taxon>Tracheophyta</taxon>
        <taxon>Spermatophyta</taxon>
        <taxon>Magnoliopsida</taxon>
        <taxon>eudicotyledons</taxon>
        <taxon>Gunneridae</taxon>
        <taxon>Pentapetalae</taxon>
        <taxon>rosids</taxon>
        <taxon>malvids</taxon>
        <taxon>Brassicales</taxon>
        <taxon>Brassicaceae</taxon>
        <taxon>Camelineae</taxon>
        <taxon>Arabidopsis</taxon>
    </lineage>
</organism>